<keyword id="KW-0119">Carbohydrate metabolism</keyword>
<keyword id="KW-0378">Hydrolase</keyword>
<keyword id="KW-1185">Reference proteome</keyword>
<organism>
    <name type="scientific">Streptococcus pneumoniae serotype 4 (strain ATCC BAA-334 / TIGR4)</name>
    <dbReference type="NCBI Taxonomy" id="170187"/>
    <lineage>
        <taxon>Bacteria</taxon>
        <taxon>Bacillati</taxon>
        <taxon>Bacillota</taxon>
        <taxon>Bacilli</taxon>
        <taxon>Lactobacillales</taxon>
        <taxon>Streptococcaceae</taxon>
        <taxon>Streptococcus</taxon>
    </lineage>
</organism>
<protein>
    <recommendedName>
        <fullName evidence="1">Glucosamine-6-phosphate deaminase</fullName>
        <ecNumber evidence="1">3.5.99.6</ecNumber>
    </recommendedName>
    <alternativeName>
        <fullName evidence="1">GlcN6P deaminase</fullName>
        <shortName evidence="1">GNPDA</shortName>
    </alternativeName>
    <alternativeName>
        <fullName evidence="1">Glucosamine-6-phosphate isomerase</fullName>
    </alternativeName>
</protein>
<feature type="chain" id="PRO_0000160177" description="Glucosamine-6-phosphate deaminase">
    <location>
        <begin position="1"/>
        <end position="233"/>
    </location>
</feature>
<feature type="active site" description="Proton acceptor; for enolization step" evidence="1">
    <location>
        <position position="62"/>
    </location>
</feature>
<feature type="active site" description="For ring-opening step" evidence="1">
    <location>
        <position position="128"/>
    </location>
</feature>
<feature type="active site" description="Proton acceptor; for ring-opening step" evidence="1">
    <location>
        <position position="130"/>
    </location>
</feature>
<feature type="active site" description="For ring-opening step" evidence="1">
    <location>
        <position position="135"/>
    </location>
</feature>
<sequence>MKVIKVENQVQGGKVAFEILKEKLANGAQTLGLATGSSPLEFYKEIVESDLDFSNLTSVNLDEYVGLDGDNPQSYRYFMQENLFNQKPFKESFLPRGVKDNAEAEVERYNQILADHPVDLQILGIGRNGHIGFNEPGTPFDSQTHLVELDQSTIEANARFFAKIEDVPTQAISMGIKNILDAKSIILFAYGESKAEAIAGTVSGPVTENLPASSLQNHPDVTIIADAEALSLL</sequence>
<reference key="1">
    <citation type="journal article" date="2001" name="Science">
        <title>Complete genome sequence of a virulent isolate of Streptococcus pneumoniae.</title>
        <authorList>
            <person name="Tettelin H."/>
            <person name="Nelson K.E."/>
            <person name="Paulsen I.T."/>
            <person name="Eisen J.A."/>
            <person name="Read T.D."/>
            <person name="Peterson S.N."/>
            <person name="Heidelberg J.F."/>
            <person name="DeBoy R.T."/>
            <person name="Haft D.H."/>
            <person name="Dodson R.J."/>
            <person name="Durkin A.S."/>
            <person name="Gwinn M.L."/>
            <person name="Kolonay J.F."/>
            <person name="Nelson W.C."/>
            <person name="Peterson J.D."/>
            <person name="Umayam L.A."/>
            <person name="White O."/>
            <person name="Salzberg S.L."/>
            <person name="Lewis M.R."/>
            <person name="Radune D."/>
            <person name="Holtzapple E.K."/>
            <person name="Khouri H.M."/>
            <person name="Wolf A.M."/>
            <person name="Utterback T.R."/>
            <person name="Hansen C.L."/>
            <person name="McDonald L.A."/>
            <person name="Feldblyum T.V."/>
            <person name="Angiuoli S.V."/>
            <person name="Dickinson T."/>
            <person name="Hickey E.K."/>
            <person name="Holt I.E."/>
            <person name="Loftus B.J."/>
            <person name="Yang F."/>
            <person name="Smith H.O."/>
            <person name="Venter J.C."/>
            <person name="Dougherty B.A."/>
            <person name="Morrison D.A."/>
            <person name="Hollingshead S.K."/>
            <person name="Fraser C.M."/>
        </authorList>
    </citation>
    <scope>NUCLEOTIDE SEQUENCE [LARGE SCALE GENOMIC DNA]</scope>
    <source>
        <strain>ATCC BAA-334 / TIGR4</strain>
    </source>
</reference>
<comment type="function">
    <text evidence="1">Catalyzes the reversible isomerization-deamination of glucosamine 6-phosphate (GlcN6P) to form fructose 6-phosphate (Fru6P) and ammonium ion.</text>
</comment>
<comment type="catalytic activity">
    <reaction evidence="1">
        <text>alpha-D-glucosamine 6-phosphate + H2O = beta-D-fructose 6-phosphate + NH4(+)</text>
        <dbReference type="Rhea" id="RHEA:12172"/>
        <dbReference type="ChEBI" id="CHEBI:15377"/>
        <dbReference type="ChEBI" id="CHEBI:28938"/>
        <dbReference type="ChEBI" id="CHEBI:57634"/>
        <dbReference type="ChEBI" id="CHEBI:75989"/>
        <dbReference type="EC" id="3.5.99.6"/>
    </reaction>
</comment>
<comment type="pathway">
    <text evidence="1">Amino-sugar metabolism; N-acetylneuraminate degradation; D-fructose 6-phosphate from N-acetylneuraminate: step 5/5.</text>
</comment>
<comment type="similarity">
    <text evidence="1">Belongs to the glucosamine/galactosamine-6-phosphate isomerase family. NagB subfamily.</text>
</comment>
<name>NAGB_STRPN</name>
<accession>Q97Q16</accession>
<dbReference type="EC" id="3.5.99.6" evidence="1"/>
<dbReference type="EMBL" id="AE005672">
    <property type="protein sequence ID" value="AAK75513.1"/>
    <property type="molecule type" value="Genomic_DNA"/>
</dbReference>
<dbReference type="PIR" id="H95164">
    <property type="entry name" value="H95164"/>
</dbReference>
<dbReference type="RefSeq" id="WP_000864616.1">
    <property type="nucleotide sequence ID" value="NC_003028.3"/>
</dbReference>
<dbReference type="SMR" id="Q97Q16"/>
<dbReference type="PaxDb" id="170187-SP_1415"/>
<dbReference type="EnsemblBacteria" id="AAK75513">
    <property type="protein sequence ID" value="AAK75513"/>
    <property type="gene ID" value="SP_1415"/>
</dbReference>
<dbReference type="KEGG" id="spn:SP_1415"/>
<dbReference type="eggNOG" id="COG0363">
    <property type="taxonomic scope" value="Bacteria"/>
</dbReference>
<dbReference type="PhylomeDB" id="Q97Q16"/>
<dbReference type="BioCyc" id="SPNE170187:G1FZB-1423-MONOMER"/>
<dbReference type="UniPathway" id="UPA00629">
    <property type="reaction ID" value="UER00684"/>
</dbReference>
<dbReference type="Proteomes" id="UP000000585">
    <property type="component" value="Chromosome"/>
</dbReference>
<dbReference type="GO" id="GO:0005737">
    <property type="term" value="C:cytoplasm"/>
    <property type="evidence" value="ECO:0007669"/>
    <property type="project" value="TreeGrafter"/>
</dbReference>
<dbReference type="GO" id="GO:0004342">
    <property type="term" value="F:glucosamine-6-phosphate deaminase activity"/>
    <property type="evidence" value="ECO:0007669"/>
    <property type="project" value="UniProtKB-UniRule"/>
</dbReference>
<dbReference type="GO" id="GO:0042802">
    <property type="term" value="F:identical protein binding"/>
    <property type="evidence" value="ECO:0007669"/>
    <property type="project" value="TreeGrafter"/>
</dbReference>
<dbReference type="GO" id="GO:0005975">
    <property type="term" value="P:carbohydrate metabolic process"/>
    <property type="evidence" value="ECO:0007669"/>
    <property type="project" value="InterPro"/>
</dbReference>
<dbReference type="GO" id="GO:0006043">
    <property type="term" value="P:glucosamine catabolic process"/>
    <property type="evidence" value="ECO:0007669"/>
    <property type="project" value="TreeGrafter"/>
</dbReference>
<dbReference type="GO" id="GO:0006046">
    <property type="term" value="P:N-acetylglucosamine catabolic process"/>
    <property type="evidence" value="ECO:0007669"/>
    <property type="project" value="TreeGrafter"/>
</dbReference>
<dbReference type="GO" id="GO:0019262">
    <property type="term" value="P:N-acetylneuraminate catabolic process"/>
    <property type="evidence" value="ECO:0007669"/>
    <property type="project" value="UniProtKB-UniRule"/>
</dbReference>
<dbReference type="CDD" id="cd01399">
    <property type="entry name" value="GlcN6P_deaminase"/>
    <property type="match status" value="1"/>
</dbReference>
<dbReference type="FunFam" id="3.40.50.1360:FF:000003">
    <property type="entry name" value="Glucosamine-6-phosphate deaminase"/>
    <property type="match status" value="1"/>
</dbReference>
<dbReference type="Gene3D" id="3.40.50.1360">
    <property type="match status" value="1"/>
</dbReference>
<dbReference type="HAMAP" id="MF_01241">
    <property type="entry name" value="GlcN6P_deamin"/>
    <property type="match status" value="1"/>
</dbReference>
<dbReference type="InterPro" id="IPR006148">
    <property type="entry name" value="Glc/Gal-6P_isomerase"/>
</dbReference>
<dbReference type="InterPro" id="IPR004547">
    <property type="entry name" value="Glucosamine6P_isomerase"/>
</dbReference>
<dbReference type="InterPro" id="IPR018321">
    <property type="entry name" value="Glucosamine6P_isomerase_CS"/>
</dbReference>
<dbReference type="InterPro" id="IPR037171">
    <property type="entry name" value="NagB/RpiA_transferase-like"/>
</dbReference>
<dbReference type="PANTHER" id="PTHR11280">
    <property type="entry name" value="GLUCOSAMINE-6-PHOSPHATE ISOMERASE"/>
    <property type="match status" value="1"/>
</dbReference>
<dbReference type="PANTHER" id="PTHR11280:SF5">
    <property type="entry name" value="GLUCOSAMINE-6-PHOSPHATE ISOMERASE"/>
    <property type="match status" value="1"/>
</dbReference>
<dbReference type="Pfam" id="PF01182">
    <property type="entry name" value="Glucosamine_iso"/>
    <property type="match status" value="1"/>
</dbReference>
<dbReference type="SUPFAM" id="SSF100950">
    <property type="entry name" value="NagB/RpiA/CoA transferase-like"/>
    <property type="match status" value="1"/>
</dbReference>
<dbReference type="PROSITE" id="PS01161">
    <property type="entry name" value="GLC_GALNAC_ISOMERASE"/>
    <property type="match status" value="1"/>
</dbReference>
<evidence type="ECO:0000255" key="1">
    <source>
        <dbReference type="HAMAP-Rule" id="MF_01241"/>
    </source>
</evidence>
<gene>
    <name evidence="1" type="primary">nagB</name>
    <name type="ordered locus">SP_1415</name>
</gene>
<proteinExistence type="inferred from homology"/>